<dbReference type="EMBL" id="Z48758">
    <property type="status" value="NOT_ANNOTATED_CDS"/>
    <property type="molecule type" value="Genomic_DNA"/>
</dbReference>
<dbReference type="EMBL" id="BK006938">
    <property type="protein sequence ID" value="DAA11965.1"/>
    <property type="molecule type" value="Genomic_DNA"/>
</dbReference>
<dbReference type="RefSeq" id="NP_001032575.1">
    <property type="nucleotide sequence ID" value="NM_001184681.1"/>
</dbReference>
<dbReference type="PDB" id="6HU9">
    <property type="method" value="EM"/>
    <property type="resolution" value="3.35 A"/>
    <property type="chains" value="l/x=1-66"/>
</dbReference>
<dbReference type="PDB" id="6T0B">
    <property type="method" value="EM"/>
    <property type="resolution" value="2.80 A"/>
    <property type="chains" value="l/y=1-66"/>
</dbReference>
<dbReference type="PDB" id="6T15">
    <property type="method" value="EM"/>
    <property type="resolution" value="3.29 A"/>
    <property type="chains" value="l=1-66"/>
</dbReference>
<dbReference type="PDB" id="6YMX">
    <property type="method" value="EM"/>
    <property type="resolution" value="3.17 A"/>
    <property type="chains" value="m=26-63"/>
</dbReference>
<dbReference type="PDB" id="6YMY">
    <property type="method" value="EM"/>
    <property type="resolution" value="3.41 A"/>
    <property type="chains" value="m=26-63"/>
</dbReference>
<dbReference type="PDB" id="8E7S">
    <property type="method" value="EM"/>
    <property type="resolution" value="3.20 A"/>
    <property type="chains" value="V/v=1-66"/>
</dbReference>
<dbReference type="PDB" id="8EC0">
    <property type="method" value="EM"/>
    <property type="resolution" value="3.30 A"/>
    <property type="chains" value="V=1-66"/>
</dbReference>
<dbReference type="PDB" id="9ETZ">
    <property type="method" value="EM"/>
    <property type="resolution" value="2.40 A"/>
    <property type="chains" value="l=22-66"/>
</dbReference>
<dbReference type="PDBsum" id="6HU9"/>
<dbReference type="PDBsum" id="6T0B"/>
<dbReference type="PDBsum" id="6T15"/>
<dbReference type="PDBsum" id="6YMX"/>
<dbReference type="PDBsum" id="6YMY"/>
<dbReference type="PDBsum" id="8E7S"/>
<dbReference type="PDBsum" id="8EC0"/>
<dbReference type="PDBsum" id="9ETZ"/>
<dbReference type="EMDB" id="EMD-10318"/>
<dbReference type="EMDB" id="EMD-10334"/>
<dbReference type="EMDB" id="EMD-10335"/>
<dbReference type="EMDB" id="EMD-10375"/>
<dbReference type="EMDB" id="EMD-10376"/>
<dbReference type="EMDB" id="EMD-10847"/>
<dbReference type="EMDB" id="EMD-10848"/>
<dbReference type="EMDB" id="EMD-19963"/>
<dbReference type="EMDB" id="EMD-27940"/>
<dbReference type="EMDB" id="EMD-28011"/>
<dbReference type="SMR" id="Q2V2P9"/>
<dbReference type="BioGRID" id="531941">
    <property type="interactions" value="19"/>
</dbReference>
<dbReference type="FunCoup" id="Q2V2P9">
    <property type="interactions" value="38"/>
</dbReference>
<dbReference type="IntAct" id="Q2V2P9">
    <property type="interactions" value="3"/>
</dbReference>
<dbReference type="MINT" id="Q2V2P9"/>
<dbReference type="STRING" id="4932.YDR119W-A"/>
<dbReference type="PaxDb" id="4932-YDR119W-A"/>
<dbReference type="PeptideAtlas" id="Q2V2P9"/>
<dbReference type="EnsemblFungi" id="YDR119W-A_mRNA">
    <property type="protein sequence ID" value="YDR119W-A"/>
    <property type="gene ID" value="YDR119W-A"/>
</dbReference>
<dbReference type="GeneID" id="3799970"/>
<dbReference type="KEGG" id="sce:YDR119W-A"/>
<dbReference type="AGR" id="SGD:S000113555"/>
<dbReference type="SGD" id="S000113555">
    <property type="gene designation" value="COX26"/>
</dbReference>
<dbReference type="VEuPathDB" id="FungiDB:YDR119W-A"/>
<dbReference type="eggNOG" id="ENOG502SFY0">
    <property type="taxonomic scope" value="Eukaryota"/>
</dbReference>
<dbReference type="HOGENOM" id="CLU_195457_0_0_1"/>
<dbReference type="InParanoid" id="Q2V2P9"/>
<dbReference type="OrthoDB" id="4037199at2759"/>
<dbReference type="BioCyc" id="YEAST:G3O-30127-MONOMER"/>
<dbReference type="BioGRID-ORCS" id="3799970">
    <property type="hits" value="0 hits in 10 CRISPR screens"/>
</dbReference>
<dbReference type="ChiTaRS" id="COX26">
    <property type="organism name" value="yeast"/>
</dbReference>
<dbReference type="PRO" id="PR:Q2V2P9"/>
<dbReference type="Proteomes" id="UP000002311">
    <property type="component" value="Chromosome IV"/>
</dbReference>
<dbReference type="RNAct" id="Q2V2P9">
    <property type="molecule type" value="protein"/>
</dbReference>
<dbReference type="GO" id="GO:0005743">
    <property type="term" value="C:mitochondrial inner membrane"/>
    <property type="evidence" value="ECO:0000314"/>
    <property type="project" value="SGD"/>
</dbReference>
<dbReference type="GO" id="GO:0005739">
    <property type="term" value="C:mitochondrion"/>
    <property type="evidence" value="ECO:0007005"/>
    <property type="project" value="SGD"/>
</dbReference>
<dbReference type="GO" id="GO:0098803">
    <property type="term" value="C:respiratory chain complex"/>
    <property type="evidence" value="ECO:0000314"/>
    <property type="project" value="SGD"/>
</dbReference>
<dbReference type="GO" id="GO:0045277">
    <property type="term" value="C:respiratory chain complex IV"/>
    <property type="evidence" value="ECO:0000315"/>
    <property type="project" value="SGD"/>
</dbReference>
<keyword id="KW-0002">3D-structure</keyword>
<keyword id="KW-0903">Direct protein sequencing</keyword>
<keyword id="KW-0472">Membrane</keyword>
<keyword id="KW-0496">Mitochondrion</keyword>
<keyword id="KW-0999">Mitochondrion inner membrane</keyword>
<keyword id="KW-1185">Reference proteome</keyword>
<keyword id="KW-0809">Transit peptide</keyword>
<keyword id="KW-0812">Transmembrane</keyword>
<keyword id="KW-1133">Transmembrane helix</keyword>
<proteinExistence type="evidence at protein level"/>
<evidence type="ECO:0000269" key="1">
    <source>
    </source>
</evidence>
<evidence type="ECO:0000269" key="2">
    <source>
    </source>
</evidence>
<evidence type="ECO:0000269" key="3">
    <source>
    </source>
</evidence>
<evidence type="ECO:0000305" key="4"/>
<evidence type="ECO:0000305" key="5">
    <source>
    </source>
</evidence>
<evidence type="ECO:0000305" key="6">
    <source>
    </source>
</evidence>
<evidence type="ECO:0007829" key="7">
    <source>
        <dbReference type="PDB" id="6T15"/>
    </source>
</evidence>
<evidence type="ECO:0007829" key="8">
    <source>
        <dbReference type="PDB" id="9ETZ"/>
    </source>
</evidence>
<name>COX26_YEAST</name>
<protein>
    <recommendedName>
        <fullName>Cytochrome c oxidase subunit 26, mitochondrial</fullName>
    </recommendedName>
</protein>
<organism>
    <name type="scientific">Saccharomyces cerevisiae (strain ATCC 204508 / S288c)</name>
    <name type="common">Baker's yeast</name>
    <dbReference type="NCBI Taxonomy" id="559292"/>
    <lineage>
        <taxon>Eukaryota</taxon>
        <taxon>Fungi</taxon>
        <taxon>Dikarya</taxon>
        <taxon>Ascomycota</taxon>
        <taxon>Saccharomycotina</taxon>
        <taxon>Saccharomycetes</taxon>
        <taxon>Saccharomycetales</taxon>
        <taxon>Saccharomycetaceae</taxon>
        <taxon>Saccharomyces</taxon>
    </lineage>
</organism>
<sequence>MFFSQVLRSSARAAPIKRYTGGRIGESWVITEGRRLIPEIFQWSAVLSVCLGWPGAVYFFSKARKA</sequence>
<gene>
    <name type="primary">COX26</name>
    <name type="ordered locus">YDR119W-A</name>
</gene>
<feature type="transit peptide" description="Mitochondrion" evidence="1 2">
    <location>
        <begin position="1"/>
        <end position="8"/>
    </location>
</feature>
<feature type="chain" id="PRO_0000253829" description="Cytochrome c oxidase subunit 26, mitochondrial">
    <location>
        <begin position="9"/>
        <end position="66"/>
    </location>
</feature>
<feature type="topological domain" description="Mitochondrial matrix" evidence="3 5">
    <location>
        <begin position="9"/>
        <end position="27"/>
    </location>
</feature>
<feature type="transmembrane region" description="Helical" evidence="3">
    <location>
        <begin position="28"/>
        <end position="64"/>
    </location>
</feature>
<feature type="topological domain" description="Mitochondrial intermembrane" evidence="3 5">
    <location>
        <begin position="65"/>
        <end position="66"/>
    </location>
</feature>
<feature type="strand" evidence="7">
    <location>
        <begin position="24"/>
        <end position="26"/>
    </location>
</feature>
<feature type="helix" evidence="8">
    <location>
        <begin position="28"/>
        <end position="59"/>
    </location>
</feature>
<feature type="strand" evidence="8">
    <location>
        <begin position="61"/>
        <end position="64"/>
    </location>
</feature>
<accession>Q2V2P9</accession>
<accession>D6VSA5</accession>
<comment type="function">
    <text evidence="6">Component of the cytochrome c oxidase, the last enzyme in the mitochondrial electron transport chain which drives oxidative phosphorylation. The respiratory chain contains 3 multisubunit complexes succinate dehydrogenase (complex II, CII), ubiquinol-cytochrome c oxidoreductase (cytochrome b-c1 complex, complex III, CIII) and cytochrome c oxidase (complex IV, CIV), that cooperate to transfer electrons derived from NADH and succinate to molecular oxygen, creating an electrochemical gradient over the inner membrane that drives transmembrane transport and the ATP synthase. Cytochrome c oxidase is the component of the respiratory chain that catalyzes the reduction of oxygen to water. Electrons originating from reduced cytochrome c in the intermembrane space (IMS) are transferred via the dinuclear copper A center (CU(A)) of COX2 and heme A of COX1 to the active site in COX1, a binuclear center (BNC) formed by heme A3 and copper B (CU(B)). The BNC reduces molecular oxygen to 2 water molecules using 4 electrons from cytochrome c in the IMS and 4 protons from the mitochondrial matrix.</text>
</comment>
<comment type="subunit">
    <text evidence="3">Component of the cytochrome c oxidase (complex IV, CIV), a multisubunit enzyme composed of 12 subunits. The complex is composed of a catalytic core of 3 subunits COX1, COX2 and COX3, encoded in the mitochondrial DNA, and 9 supernumerary subunits COX4, COX5A (or COX5B), COX6, COX7, COX8, COX9, COX12, COX13 and COX26, which are encoded in the nuclear genome. The complex exists as a monomer or a dimer and forms supercomplexes (SCs) in the inner mitochondrial membrane with a dimer of ubiquinol-cytochrome c oxidoreductase (cytochrome b-c1 complex, complex III, CIII), resulting in 2 different assemblies (supercomplexes III(2)IV and III(2)IV(2)).</text>
</comment>
<comment type="subcellular location">
    <subcellularLocation>
        <location evidence="1 3">Mitochondrion inner membrane</location>
        <topology evidence="1 3">Single-pass membrane protein</topology>
    </subcellularLocation>
</comment>
<comment type="similarity">
    <text evidence="4">Belongs to the fungal cytochrome c oxidase subunit 26 family.</text>
</comment>
<reference key="1">
    <citation type="journal article" date="1997" name="Nature">
        <title>The nucleotide sequence of Saccharomyces cerevisiae chromosome IV.</title>
        <authorList>
            <person name="Jacq C."/>
            <person name="Alt-Moerbe J."/>
            <person name="Andre B."/>
            <person name="Arnold W."/>
            <person name="Bahr A."/>
            <person name="Ballesta J.P.G."/>
            <person name="Bargues M."/>
            <person name="Baron L."/>
            <person name="Becker A."/>
            <person name="Biteau N."/>
            <person name="Bloecker H."/>
            <person name="Blugeon C."/>
            <person name="Boskovic J."/>
            <person name="Brandt P."/>
            <person name="Brueckner M."/>
            <person name="Buitrago M.J."/>
            <person name="Coster F."/>
            <person name="Delaveau T."/>
            <person name="del Rey F."/>
            <person name="Dujon B."/>
            <person name="Eide L.G."/>
            <person name="Garcia-Cantalejo J.M."/>
            <person name="Goffeau A."/>
            <person name="Gomez-Peris A."/>
            <person name="Granotier C."/>
            <person name="Hanemann V."/>
            <person name="Hankeln T."/>
            <person name="Hoheisel J.D."/>
            <person name="Jaeger W."/>
            <person name="Jimenez A."/>
            <person name="Jonniaux J.-L."/>
            <person name="Kraemer C."/>
            <person name="Kuester H."/>
            <person name="Laamanen P."/>
            <person name="Legros Y."/>
            <person name="Louis E.J."/>
            <person name="Moeller-Rieker S."/>
            <person name="Monnet A."/>
            <person name="Moro M."/>
            <person name="Mueller-Auer S."/>
            <person name="Nussbaumer B."/>
            <person name="Paricio N."/>
            <person name="Paulin L."/>
            <person name="Perea J."/>
            <person name="Perez-Alonso M."/>
            <person name="Perez-Ortin J.E."/>
            <person name="Pohl T.M."/>
            <person name="Prydz H."/>
            <person name="Purnelle B."/>
            <person name="Rasmussen S.W."/>
            <person name="Remacha M.A."/>
            <person name="Revuelta J.L."/>
            <person name="Rieger M."/>
            <person name="Salom D."/>
            <person name="Saluz H.P."/>
            <person name="Saiz J.E."/>
            <person name="Saren A.-M."/>
            <person name="Schaefer M."/>
            <person name="Scharfe M."/>
            <person name="Schmidt E.R."/>
            <person name="Schneider C."/>
            <person name="Scholler P."/>
            <person name="Schwarz S."/>
            <person name="Soler-Mira A."/>
            <person name="Urrestarazu L.A."/>
            <person name="Verhasselt P."/>
            <person name="Vissers S."/>
            <person name="Voet M."/>
            <person name="Volckaert G."/>
            <person name="Wagner G."/>
            <person name="Wambutt R."/>
            <person name="Wedler E."/>
            <person name="Wedler H."/>
            <person name="Woelfl S."/>
            <person name="Harris D.E."/>
            <person name="Bowman S."/>
            <person name="Brown D."/>
            <person name="Churcher C.M."/>
            <person name="Connor R."/>
            <person name="Dedman K."/>
            <person name="Gentles S."/>
            <person name="Hamlin N."/>
            <person name="Hunt S."/>
            <person name="Jones L."/>
            <person name="McDonald S."/>
            <person name="Murphy L.D."/>
            <person name="Niblett D."/>
            <person name="Odell C."/>
            <person name="Oliver K."/>
            <person name="Rajandream M.A."/>
            <person name="Richards C."/>
            <person name="Shore L."/>
            <person name="Walsh S.V."/>
            <person name="Barrell B.G."/>
            <person name="Dietrich F.S."/>
            <person name="Mulligan J.T."/>
            <person name="Allen E."/>
            <person name="Araujo R."/>
            <person name="Aviles E."/>
            <person name="Berno A."/>
            <person name="Carpenter J."/>
            <person name="Chen E."/>
            <person name="Cherry J.M."/>
            <person name="Chung E."/>
            <person name="Duncan M."/>
            <person name="Hunicke-Smith S."/>
            <person name="Hyman R.W."/>
            <person name="Komp C."/>
            <person name="Lashkari D."/>
            <person name="Lew H."/>
            <person name="Lin D."/>
            <person name="Mosedale D."/>
            <person name="Nakahara K."/>
            <person name="Namath A."/>
            <person name="Oefner P."/>
            <person name="Oh C."/>
            <person name="Petel F.X."/>
            <person name="Roberts D."/>
            <person name="Schramm S."/>
            <person name="Schroeder M."/>
            <person name="Shogren T."/>
            <person name="Shroff N."/>
            <person name="Winant A."/>
            <person name="Yelton M.A."/>
            <person name="Botstein D."/>
            <person name="Davis R.W."/>
            <person name="Johnston M."/>
            <person name="Andrews S."/>
            <person name="Brinkman R."/>
            <person name="Cooper J."/>
            <person name="Ding H."/>
            <person name="Du Z."/>
            <person name="Favello A."/>
            <person name="Fulton L."/>
            <person name="Gattung S."/>
            <person name="Greco T."/>
            <person name="Hallsworth K."/>
            <person name="Hawkins J."/>
            <person name="Hillier L.W."/>
            <person name="Jier M."/>
            <person name="Johnson D."/>
            <person name="Johnston L."/>
            <person name="Kirsten J."/>
            <person name="Kucaba T."/>
            <person name="Langston Y."/>
            <person name="Latreille P."/>
            <person name="Le T."/>
            <person name="Mardis E."/>
            <person name="Menezes S."/>
            <person name="Miller N."/>
            <person name="Nhan M."/>
            <person name="Pauley A."/>
            <person name="Peluso D."/>
            <person name="Rifkin L."/>
            <person name="Riles L."/>
            <person name="Taich A."/>
            <person name="Trevaskis E."/>
            <person name="Vignati D."/>
            <person name="Wilcox L."/>
            <person name="Wohldman P."/>
            <person name="Vaudin M."/>
            <person name="Wilson R."/>
            <person name="Waterston R."/>
            <person name="Albermann K."/>
            <person name="Hani J."/>
            <person name="Heumann K."/>
            <person name="Kleine K."/>
            <person name="Mewes H.-W."/>
            <person name="Zollner A."/>
            <person name="Zaccaria P."/>
        </authorList>
    </citation>
    <scope>NUCLEOTIDE SEQUENCE [LARGE SCALE GENOMIC DNA]</scope>
    <source>
        <strain>ATCC 204508 / S288c</strain>
    </source>
</reference>
<reference key="2">
    <citation type="journal article" date="2014" name="G3 (Bethesda)">
        <title>The reference genome sequence of Saccharomyces cerevisiae: Then and now.</title>
        <authorList>
            <person name="Engel S.R."/>
            <person name="Dietrich F.S."/>
            <person name="Fisk D.G."/>
            <person name="Binkley G."/>
            <person name="Balakrishnan R."/>
            <person name="Costanzo M.C."/>
            <person name="Dwight S.S."/>
            <person name="Hitz B.C."/>
            <person name="Karra K."/>
            <person name="Nash R.S."/>
            <person name="Weng S."/>
            <person name="Wong E.D."/>
            <person name="Lloyd P."/>
            <person name="Skrzypek M.S."/>
            <person name="Miyasato S.R."/>
            <person name="Simison M."/>
            <person name="Cherry J.M."/>
        </authorList>
    </citation>
    <scope>GENOME REANNOTATION</scope>
    <source>
        <strain>ATCC 204508 / S288c</strain>
    </source>
</reference>
<reference key="3">
    <citation type="journal article" date="2003" name="Science">
        <title>Finding functional features in Saccharomyces genomes by phylogenetic footprinting.</title>
        <authorList>
            <person name="Cliften P.F."/>
            <person name="Sudarsanam P."/>
            <person name="Desikan A."/>
            <person name="Fulton L."/>
            <person name="Fulton B."/>
            <person name="Majors J."/>
            <person name="Waterston R."/>
            <person name="Cohen B.A."/>
            <person name="Johnston M."/>
        </authorList>
    </citation>
    <scope>GENOME REANNOTATION</scope>
</reference>
<reference key="4">
    <citation type="journal article" date="2016" name="Biochim. Biophys. Acta">
        <title>Supercomplex-associated Cox26 protein binds to cytochrome c oxidase.</title>
        <authorList>
            <person name="Strecker V."/>
            <person name="Kadeer Z."/>
            <person name="Heidler J."/>
            <person name="Cruciat C.M."/>
            <person name="Angerer H."/>
            <person name="Giese H."/>
            <person name="Pfeiffer K."/>
            <person name="Stuart R.A."/>
            <person name="Wittig I."/>
        </authorList>
    </citation>
    <scope>PROTEIN SEQUENCE OF 9-18</scope>
    <scope>FUNCTION</scope>
    <scope>IDENTIFICATION IN THE CYTOCHROME C OXIDASE COMPLEX</scope>
</reference>
<reference key="5">
    <citation type="journal article" date="2016" name="Biochim. Biophys. Acta">
        <title>Cox26 is a novel stoichiometric subunit of the yeast cytochrome c oxidase.</title>
        <authorList>
            <person name="Levchenko M."/>
            <person name="Wuttke J.M."/>
            <person name="Roempler K."/>
            <person name="Schmidt B."/>
            <person name="Neifer K."/>
            <person name="Juris L."/>
            <person name="Wissel M."/>
            <person name="Rehling P."/>
            <person name="Deckers M."/>
        </authorList>
    </citation>
    <scope>PROTEIN SEQUENCE OF N-TERMINUS</scope>
    <scope>IDENTIFICATION IN THE CYTOCHROME C OXIDASE COMPLEX</scope>
    <scope>SUBCELLULAR LOCATION</scope>
    <scope>TOPOLOGY</scope>
</reference>
<reference key="6">
    <citation type="journal article" date="2019" name="Nat. Struct. Mol. Biol.">
        <title>Structure of yeast cytochrome c oxidase in a supercomplex with cytochrome bc1.</title>
        <authorList>
            <person name="Hartley A.M."/>
            <person name="Lukoyanova N."/>
            <person name="Zhang Y."/>
            <person name="Cabrera-Orefice A."/>
            <person name="Arnold S."/>
            <person name="Meunier B."/>
            <person name="Pinotsis N."/>
            <person name="Marechal A."/>
        </authorList>
    </citation>
    <scope>STRUCTURE BY ELECTRON MICROSCOPY (3.35 ANGSTROMS)</scope>
    <scope>FUNCTION</scope>
</reference>